<dbReference type="EC" id="2.7.7.6" evidence="1"/>
<dbReference type="EMBL" id="CP001079">
    <property type="protein sequence ID" value="ACM49195.1"/>
    <property type="molecule type" value="Genomic_DNA"/>
</dbReference>
<dbReference type="RefSeq" id="WP_012658906.1">
    <property type="nucleotide sequence ID" value="NC_012026.1"/>
</dbReference>
<dbReference type="SMR" id="B9KI83"/>
<dbReference type="STRING" id="320483.AMF_324"/>
<dbReference type="GeneID" id="7398433"/>
<dbReference type="KEGG" id="amf:AMF_324"/>
<dbReference type="PATRIC" id="fig|320483.3.peg.384"/>
<dbReference type="eggNOG" id="COG1758">
    <property type="taxonomic scope" value="Bacteria"/>
</dbReference>
<dbReference type="HOGENOM" id="CLU_125406_2_1_5"/>
<dbReference type="Proteomes" id="UP000007307">
    <property type="component" value="Chromosome"/>
</dbReference>
<dbReference type="GO" id="GO:0000428">
    <property type="term" value="C:DNA-directed RNA polymerase complex"/>
    <property type="evidence" value="ECO:0007669"/>
    <property type="project" value="UniProtKB-KW"/>
</dbReference>
<dbReference type="GO" id="GO:0003677">
    <property type="term" value="F:DNA binding"/>
    <property type="evidence" value="ECO:0007669"/>
    <property type="project" value="UniProtKB-UniRule"/>
</dbReference>
<dbReference type="GO" id="GO:0003899">
    <property type="term" value="F:DNA-directed RNA polymerase activity"/>
    <property type="evidence" value="ECO:0007669"/>
    <property type="project" value="UniProtKB-UniRule"/>
</dbReference>
<dbReference type="GO" id="GO:0006351">
    <property type="term" value="P:DNA-templated transcription"/>
    <property type="evidence" value="ECO:0007669"/>
    <property type="project" value="UniProtKB-UniRule"/>
</dbReference>
<dbReference type="Gene3D" id="3.90.940.10">
    <property type="match status" value="1"/>
</dbReference>
<dbReference type="HAMAP" id="MF_00366">
    <property type="entry name" value="RNApol_bact_RpoZ"/>
    <property type="match status" value="1"/>
</dbReference>
<dbReference type="InterPro" id="IPR003716">
    <property type="entry name" value="DNA-dir_RNA_pol_omega"/>
</dbReference>
<dbReference type="InterPro" id="IPR006110">
    <property type="entry name" value="Pol_omega/Rpo6/RPB6"/>
</dbReference>
<dbReference type="InterPro" id="IPR036161">
    <property type="entry name" value="RPB6/omega-like_sf"/>
</dbReference>
<dbReference type="NCBIfam" id="TIGR00690">
    <property type="entry name" value="rpoZ"/>
    <property type="match status" value="1"/>
</dbReference>
<dbReference type="Pfam" id="PF01192">
    <property type="entry name" value="RNA_pol_Rpb6"/>
    <property type="match status" value="1"/>
</dbReference>
<dbReference type="SMART" id="SM01409">
    <property type="entry name" value="RNA_pol_Rpb6"/>
    <property type="match status" value="1"/>
</dbReference>
<dbReference type="SUPFAM" id="SSF63562">
    <property type="entry name" value="RPB6/omega subunit-like"/>
    <property type="match status" value="1"/>
</dbReference>
<comment type="function">
    <text evidence="1">Promotes RNA polymerase assembly. Latches the N- and C-terminal regions of the beta' subunit thereby facilitating its interaction with the beta and alpha subunits.</text>
</comment>
<comment type="catalytic activity">
    <reaction evidence="1">
        <text>RNA(n) + a ribonucleoside 5'-triphosphate = RNA(n+1) + diphosphate</text>
        <dbReference type="Rhea" id="RHEA:21248"/>
        <dbReference type="Rhea" id="RHEA-COMP:14527"/>
        <dbReference type="Rhea" id="RHEA-COMP:17342"/>
        <dbReference type="ChEBI" id="CHEBI:33019"/>
        <dbReference type="ChEBI" id="CHEBI:61557"/>
        <dbReference type="ChEBI" id="CHEBI:140395"/>
        <dbReference type="EC" id="2.7.7.6"/>
    </reaction>
</comment>
<comment type="subunit">
    <text evidence="1">The RNAP catalytic core consists of 2 alpha, 1 beta, 1 beta' and 1 omega subunit. When a sigma factor is associated with the core the holoenzyme is formed, which can initiate transcription.</text>
</comment>
<comment type="similarity">
    <text evidence="1">Belongs to the RNA polymerase subunit omega family.</text>
</comment>
<name>RPOZ_ANAMF</name>
<protein>
    <recommendedName>
        <fullName evidence="1">DNA-directed RNA polymerase subunit omega</fullName>
        <shortName evidence="1">RNAP omega subunit</shortName>
        <ecNumber evidence="1">2.7.7.6</ecNumber>
    </recommendedName>
    <alternativeName>
        <fullName evidence="1">RNA polymerase omega subunit</fullName>
    </alternativeName>
    <alternativeName>
        <fullName evidence="1">Transcriptase subunit omega</fullName>
    </alternativeName>
</protein>
<gene>
    <name evidence="1" type="primary">rpoZ</name>
    <name type="ordered locus">AMF_324</name>
</gene>
<organism>
    <name type="scientific">Anaplasma marginale (strain Florida)</name>
    <dbReference type="NCBI Taxonomy" id="320483"/>
    <lineage>
        <taxon>Bacteria</taxon>
        <taxon>Pseudomonadati</taxon>
        <taxon>Pseudomonadota</taxon>
        <taxon>Alphaproteobacteria</taxon>
        <taxon>Rickettsiales</taxon>
        <taxon>Anaplasmataceae</taxon>
        <taxon>Anaplasma</taxon>
    </lineage>
</organism>
<accession>B9KI83</accession>
<proteinExistence type="inferred from homology"/>
<feature type="chain" id="PRO_1000133714" description="DNA-directed RNA polymerase subunit omega">
    <location>
        <begin position="1"/>
        <end position="128"/>
    </location>
</feature>
<feature type="region of interest" description="Disordered" evidence="2">
    <location>
        <begin position="87"/>
        <end position="106"/>
    </location>
</feature>
<sequence>MREGDSGYFSCYDGNRFRLVILASQRAHELSSGACTAVARKGDKNTVVALREIVGEQLDLAAVFKLAVNRCRKYLEEFTNAREVAAARSSQAAPKSAPGQEIGKSFREKDPSAAAFLDQEQFFSGGGE</sequence>
<evidence type="ECO:0000255" key="1">
    <source>
        <dbReference type="HAMAP-Rule" id="MF_00366"/>
    </source>
</evidence>
<evidence type="ECO:0000256" key="2">
    <source>
        <dbReference type="SAM" id="MobiDB-lite"/>
    </source>
</evidence>
<keyword id="KW-0240">DNA-directed RNA polymerase</keyword>
<keyword id="KW-0548">Nucleotidyltransferase</keyword>
<keyword id="KW-1185">Reference proteome</keyword>
<keyword id="KW-0804">Transcription</keyword>
<keyword id="KW-0808">Transferase</keyword>
<reference key="1">
    <citation type="journal article" date="2009" name="BMC Genomics">
        <title>Conservation in the face of diversity: multistrain analysis of an intracellular bacterium.</title>
        <authorList>
            <person name="Dark M.J."/>
            <person name="Herndon D.R."/>
            <person name="Kappmeyer L.S."/>
            <person name="Gonzales M.P."/>
            <person name="Nordeen E."/>
            <person name="Palmer G.H."/>
            <person name="Knowles D.P. Jr."/>
            <person name="Brayton K.A."/>
        </authorList>
    </citation>
    <scope>NUCLEOTIDE SEQUENCE [LARGE SCALE GENOMIC DNA]</scope>
    <source>
        <strain>Florida</strain>
    </source>
</reference>